<feature type="chain" id="PRO_1000015709" description="Elongation factor Tu">
    <location>
        <begin position="1"/>
        <end position="396"/>
    </location>
</feature>
<feature type="domain" description="tr-type G">
    <location>
        <begin position="10"/>
        <end position="205"/>
    </location>
</feature>
<feature type="region of interest" description="G1" evidence="1">
    <location>
        <begin position="19"/>
        <end position="26"/>
    </location>
</feature>
<feature type="region of interest" description="G2" evidence="1">
    <location>
        <begin position="62"/>
        <end position="66"/>
    </location>
</feature>
<feature type="region of interest" description="G3" evidence="1">
    <location>
        <begin position="83"/>
        <end position="86"/>
    </location>
</feature>
<feature type="region of interest" description="G4" evidence="1">
    <location>
        <begin position="138"/>
        <end position="141"/>
    </location>
</feature>
<feature type="region of interest" description="G5" evidence="1">
    <location>
        <begin position="175"/>
        <end position="177"/>
    </location>
</feature>
<feature type="binding site" evidence="2">
    <location>
        <begin position="19"/>
        <end position="26"/>
    </location>
    <ligand>
        <name>GTP</name>
        <dbReference type="ChEBI" id="CHEBI:37565"/>
    </ligand>
</feature>
<feature type="binding site" evidence="2">
    <location>
        <position position="26"/>
    </location>
    <ligand>
        <name>Mg(2+)</name>
        <dbReference type="ChEBI" id="CHEBI:18420"/>
    </ligand>
</feature>
<feature type="binding site" evidence="2">
    <location>
        <begin position="83"/>
        <end position="87"/>
    </location>
    <ligand>
        <name>GTP</name>
        <dbReference type="ChEBI" id="CHEBI:37565"/>
    </ligand>
</feature>
<feature type="binding site" evidence="2">
    <location>
        <begin position="138"/>
        <end position="141"/>
    </location>
    <ligand>
        <name>GTP</name>
        <dbReference type="ChEBI" id="CHEBI:37565"/>
    </ligand>
</feature>
<reference key="1">
    <citation type="submission" date="2006-12" db="EMBL/GenBank/DDBJ databases">
        <title>Complete sequence of Mycobacterium vanbaalenii PYR-1.</title>
        <authorList>
            <consortium name="US DOE Joint Genome Institute"/>
            <person name="Copeland A."/>
            <person name="Lucas S."/>
            <person name="Lapidus A."/>
            <person name="Barry K."/>
            <person name="Detter J.C."/>
            <person name="Glavina del Rio T."/>
            <person name="Hammon N."/>
            <person name="Israni S."/>
            <person name="Dalin E."/>
            <person name="Tice H."/>
            <person name="Pitluck S."/>
            <person name="Singan V."/>
            <person name="Schmutz J."/>
            <person name="Larimer F."/>
            <person name="Land M."/>
            <person name="Hauser L."/>
            <person name="Kyrpides N."/>
            <person name="Anderson I.J."/>
            <person name="Miller C."/>
            <person name="Richardson P."/>
        </authorList>
    </citation>
    <scope>NUCLEOTIDE SEQUENCE [LARGE SCALE GENOMIC DNA]</scope>
    <source>
        <strain>DSM 7251 / JCM 13017 / BCRC 16820 / KCTC 9966 / NRRL B-24157 / PYR-1</strain>
    </source>
</reference>
<gene>
    <name evidence="2" type="primary">tuf</name>
    <name type="ordered locus">Mvan_1282</name>
</gene>
<dbReference type="EC" id="3.6.5.3" evidence="2"/>
<dbReference type="EMBL" id="CP000511">
    <property type="protein sequence ID" value="ABM12116.1"/>
    <property type="molecule type" value="Genomic_DNA"/>
</dbReference>
<dbReference type="RefSeq" id="WP_011778548.1">
    <property type="nucleotide sequence ID" value="NZ_JACKSD010000069.1"/>
</dbReference>
<dbReference type="SMR" id="A1T4L6"/>
<dbReference type="STRING" id="350058.Mvan_1282"/>
<dbReference type="KEGG" id="mva:Mvan_1282"/>
<dbReference type="eggNOG" id="COG0050">
    <property type="taxonomic scope" value="Bacteria"/>
</dbReference>
<dbReference type="HOGENOM" id="CLU_007265_0_1_11"/>
<dbReference type="Proteomes" id="UP000009159">
    <property type="component" value="Chromosome"/>
</dbReference>
<dbReference type="GO" id="GO:0005829">
    <property type="term" value="C:cytosol"/>
    <property type="evidence" value="ECO:0007669"/>
    <property type="project" value="TreeGrafter"/>
</dbReference>
<dbReference type="GO" id="GO:0005525">
    <property type="term" value="F:GTP binding"/>
    <property type="evidence" value="ECO:0007669"/>
    <property type="project" value="UniProtKB-UniRule"/>
</dbReference>
<dbReference type="GO" id="GO:0003924">
    <property type="term" value="F:GTPase activity"/>
    <property type="evidence" value="ECO:0007669"/>
    <property type="project" value="InterPro"/>
</dbReference>
<dbReference type="GO" id="GO:0003746">
    <property type="term" value="F:translation elongation factor activity"/>
    <property type="evidence" value="ECO:0007669"/>
    <property type="project" value="UniProtKB-UniRule"/>
</dbReference>
<dbReference type="CDD" id="cd01884">
    <property type="entry name" value="EF_Tu"/>
    <property type="match status" value="1"/>
</dbReference>
<dbReference type="CDD" id="cd03697">
    <property type="entry name" value="EFTU_II"/>
    <property type="match status" value="1"/>
</dbReference>
<dbReference type="CDD" id="cd03707">
    <property type="entry name" value="EFTU_III"/>
    <property type="match status" value="1"/>
</dbReference>
<dbReference type="FunFam" id="2.40.30.10:FF:000001">
    <property type="entry name" value="Elongation factor Tu"/>
    <property type="match status" value="1"/>
</dbReference>
<dbReference type="FunFam" id="3.40.50.300:FF:000003">
    <property type="entry name" value="Elongation factor Tu"/>
    <property type="match status" value="1"/>
</dbReference>
<dbReference type="Gene3D" id="3.40.50.300">
    <property type="entry name" value="P-loop containing nucleotide triphosphate hydrolases"/>
    <property type="match status" value="1"/>
</dbReference>
<dbReference type="Gene3D" id="2.40.30.10">
    <property type="entry name" value="Translation factors"/>
    <property type="match status" value="2"/>
</dbReference>
<dbReference type="HAMAP" id="MF_00118_B">
    <property type="entry name" value="EF_Tu_B"/>
    <property type="match status" value="1"/>
</dbReference>
<dbReference type="InterPro" id="IPR041709">
    <property type="entry name" value="EF-Tu_GTP-bd"/>
</dbReference>
<dbReference type="InterPro" id="IPR050055">
    <property type="entry name" value="EF-Tu_GTPase"/>
</dbReference>
<dbReference type="InterPro" id="IPR004161">
    <property type="entry name" value="EFTu-like_2"/>
</dbReference>
<dbReference type="InterPro" id="IPR033720">
    <property type="entry name" value="EFTU_2"/>
</dbReference>
<dbReference type="InterPro" id="IPR031157">
    <property type="entry name" value="G_TR_CS"/>
</dbReference>
<dbReference type="InterPro" id="IPR027417">
    <property type="entry name" value="P-loop_NTPase"/>
</dbReference>
<dbReference type="InterPro" id="IPR005225">
    <property type="entry name" value="Small_GTP-bd"/>
</dbReference>
<dbReference type="InterPro" id="IPR000795">
    <property type="entry name" value="T_Tr_GTP-bd_dom"/>
</dbReference>
<dbReference type="InterPro" id="IPR009000">
    <property type="entry name" value="Transl_B-barrel_sf"/>
</dbReference>
<dbReference type="InterPro" id="IPR009001">
    <property type="entry name" value="Transl_elong_EF1A/Init_IF2_C"/>
</dbReference>
<dbReference type="InterPro" id="IPR004541">
    <property type="entry name" value="Transl_elong_EFTu/EF1A_bac/org"/>
</dbReference>
<dbReference type="InterPro" id="IPR004160">
    <property type="entry name" value="Transl_elong_EFTu/EF1A_C"/>
</dbReference>
<dbReference type="NCBIfam" id="TIGR00485">
    <property type="entry name" value="EF-Tu"/>
    <property type="match status" value="1"/>
</dbReference>
<dbReference type="NCBIfam" id="NF000766">
    <property type="entry name" value="PRK00049.1"/>
    <property type="match status" value="1"/>
</dbReference>
<dbReference type="NCBIfam" id="NF009372">
    <property type="entry name" value="PRK12735.1"/>
    <property type="match status" value="1"/>
</dbReference>
<dbReference type="NCBIfam" id="NF009373">
    <property type="entry name" value="PRK12736.1"/>
    <property type="match status" value="1"/>
</dbReference>
<dbReference type="NCBIfam" id="TIGR00231">
    <property type="entry name" value="small_GTP"/>
    <property type="match status" value="1"/>
</dbReference>
<dbReference type="PANTHER" id="PTHR43721:SF22">
    <property type="entry name" value="ELONGATION FACTOR TU, MITOCHONDRIAL"/>
    <property type="match status" value="1"/>
</dbReference>
<dbReference type="PANTHER" id="PTHR43721">
    <property type="entry name" value="ELONGATION FACTOR TU-RELATED"/>
    <property type="match status" value="1"/>
</dbReference>
<dbReference type="Pfam" id="PF00009">
    <property type="entry name" value="GTP_EFTU"/>
    <property type="match status" value="1"/>
</dbReference>
<dbReference type="Pfam" id="PF03144">
    <property type="entry name" value="GTP_EFTU_D2"/>
    <property type="match status" value="1"/>
</dbReference>
<dbReference type="Pfam" id="PF03143">
    <property type="entry name" value="GTP_EFTU_D3"/>
    <property type="match status" value="1"/>
</dbReference>
<dbReference type="PRINTS" id="PR00315">
    <property type="entry name" value="ELONGATNFCT"/>
</dbReference>
<dbReference type="SUPFAM" id="SSF50465">
    <property type="entry name" value="EF-Tu/eEF-1alpha/eIF2-gamma C-terminal domain"/>
    <property type="match status" value="1"/>
</dbReference>
<dbReference type="SUPFAM" id="SSF52540">
    <property type="entry name" value="P-loop containing nucleoside triphosphate hydrolases"/>
    <property type="match status" value="1"/>
</dbReference>
<dbReference type="SUPFAM" id="SSF50447">
    <property type="entry name" value="Translation proteins"/>
    <property type="match status" value="1"/>
</dbReference>
<dbReference type="PROSITE" id="PS00301">
    <property type="entry name" value="G_TR_1"/>
    <property type="match status" value="1"/>
</dbReference>
<dbReference type="PROSITE" id="PS51722">
    <property type="entry name" value="G_TR_2"/>
    <property type="match status" value="1"/>
</dbReference>
<name>EFTU_MYCVP</name>
<evidence type="ECO:0000250" key="1"/>
<evidence type="ECO:0000255" key="2">
    <source>
        <dbReference type="HAMAP-Rule" id="MF_00118"/>
    </source>
</evidence>
<comment type="function">
    <text evidence="2">GTP hydrolase that promotes the GTP-dependent binding of aminoacyl-tRNA to the A-site of ribosomes during protein biosynthesis.</text>
</comment>
<comment type="catalytic activity">
    <reaction evidence="2">
        <text>GTP + H2O = GDP + phosphate + H(+)</text>
        <dbReference type="Rhea" id="RHEA:19669"/>
        <dbReference type="ChEBI" id="CHEBI:15377"/>
        <dbReference type="ChEBI" id="CHEBI:15378"/>
        <dbReference type="ChEBI" id="CHEBI:37565"/>
        <dbReference type="ChEBI" id="CHEBI:43474"/>
        <dbReference type="ChEBI" id="CHEBI:58189"/>
        <dbReference type="EC" id="3.6.5.3"/>
    </reaction>
    <physiologicalReaction direction="left-to-right" evidence="2">
        <dbReference type="Rhea" id="RHEA:19670"/>
    </physiologicalReaction>
</comment>
<comment type="subunit">
    <text evidence="2">Monomer.</text>
</comment>
<comment type="subcellular location">
    <subcellularLocation>
        <location evidence="2">Cytoplasm</location>
    </subcellularLocation>
</comment>
<comment type="similarity">
    <text evidence="2">Belongs to the TRAFAC class translation factor GTPase superfamily. Classic translation factor GTPase family. EF-Tu/EF-1A subfamily.</text>
</comment>
<keyword id="KW-0963">Cytoplasm</keyword>
<keyword id="KW-0251">Elongation factor</keyword>
<keyword id="KW-0342">GTP-binding</keyword>
<keyword id="KW-0378">Hydrolase</keyword>
<keyword id="KW-0460">Magnesium</keyword>
<keyword id="KW-0479">Metal-binding</keyword>
<keyword id="KW-0547">Nucleotide-binding</keyword>
<keyword id="KW-0648">Protein biosynthesis</keyword>
<accession>A1T4L6</accession>
<organism>
    <name type="scientific">Mycolicibacterium vanbaalenii (strain DSM 7251 / JCM 13017 / BCRC 16820 / KCTC 9966 / NRRL B-24157 / PYR-1)</name>
    <name type="common">Mycobacterium vanbaalenii</name>
    <dbReference type="NCBI Taxonomy" id="350058"/>
    <lineage>
        <taxon>Bacteria</taxon>
        <taxon>Bacillati</taxon>
        <taxon>Actinomycetota</taxon>
        <taxon>Actinomycetes</taxon>
        <taxon>Mycobacteriales</taxon>
        <taxon>Mycobacteriaceae</taxon>
        <taxon>Mycolicibacterium</taxon>
    </lineage>
</organism>
<protein>
    <recommendedName>
        <fullName evidence="2">Elongation factor Tu</fullName>
        <shortName evidence="2">EF-Tu</shortName>
        <ecNumber evidence="2">3.6.5.3</ecNumber>
    </recommendedName>
</protein>
<sequence>MAKAKFERTKPHVNIGTIGHVDHGKTTLTAAITKVLHDKYPDLNESRAFDQIDNAPEERQRGITINISHVEYQTDKRHYAHVDAPGHADYIKNMITGAAQMDGAILVVAATDGPMPQTREHVLLARQVGVPYILVALNKADMVDDEELIELVEMEVRELLAAQDFDEEAPVVKVSALKALEGDEKWVKSVEELMEAVDESIPDPVRETDKPFLMPVEDVFTITGRGTVVTGRVERGIINVNEEVEIVGIRPDTTKTTVTGVEMFRKLLDQGQAGDNVGLLLRGIKREDVERGQVVVKPGTTTPHTDFEGSVYILSKDEGGRHTPFFNNYRPQFYFRTTDVTGVVTLPEGTEMVMPGDNTDISVKLIQPVAMDEGLRFAIREGGRTVGAGRVTKIIK</sequence>
<proteinExistence type="inferred from homology"/>